<gene>
    <name type="primary">ttrS</name>
    <name type="ordered locus">STM1386</name>
</gene>
<organism>
    <name type="scientific">Salmonella typhimurium (strain LT2 / SGSC1412 / ATCC 700720)</name>
    <dbReference type="NCBI Taxonomy" id="99287"/>
    <lineage>
        <taxon>Bacteria</taxon>
        <taxon>Pseudomonadati</taxon>
        <taxon>Pseudomonadota</taxon>
        <taxon>Gammaproteobacteria</taxon>
        <taxon>Enterobacterales</taxon>
        <taxon>Enterobacteriaceae</taxon>
        <taxon>Salmonella</taxon>
    </lineage>
</organism>
<reference key="1">
    <citation type="journal article" date="1999" name="Mol. Microbiol.">
        <title>Molecular and functional analysis indicates a mosaic structure of Salmonella pathogenicity island 2.</title>
        <authorList>
            <person name="Hensel M."/>
            <person name="Egelseer C."/>
            <person name="Nikolaus T."/>
        </authorList>
    </citation>
    <scope>NUCLEOTIDE SEQUENCE [GENOMIC DNA]</scope>
    <source>
        <strain>LT2</strain>
    </source>
</reference>
<reference key="2">
    <citation type="journal article" date="2001" name="J. Bacteriol.">
        <title>The alternative electron acceptor tetrathionate supports B12-dependent anaerobic growth of Salmonella enterica serovar typhimurium on ethanolamine or 1,2-propanediol.</title>
        <authorList>
            <person name="Price-Carter M."/>
            <person name="Tingey J."/>
            <person name="Bobik T.A."/>
            <person name="Roth J.R."/>
        </authorList>
    </citation>
    <scope>NUCLEOTIDE SEQUENCE [GENOMIC DNA]</scope>
    <scope>FUNCTION</scope>
    <source>
        <strain>LT2</strain>
    </source>
</reference>
<reference key="3">
    <citation type="journal article" date="2001" name="Nature">
        <title>Complete genome sequence of Salmonella enterica serovar Typhimurium LT2.</title>
        <authorList>
            <person name="McClelland M."/>
            <person name="Sanderson K.E."/>
            <person name="Spieth J."/>
            <person name="Clifton S.W."/>
            <person name="Latreille P."/>
            <person name="Courtney L."/>
            <person name="Porwollik S."/>
            <person name="Ali J."/>
            <person name="Dante M."/>
            <person name="Du F."/>
            <person name="Hou S."/>
            <person name="Layman D."/>
            <person name="Leonard S."/>
            <person name="Nguyen C."/>
            <person name="Scott K."/>
            <person name="Holmes A."/>
            <person name="Grewal N."/>
            <person name="Mulvaney E."/>
            <person name="Ryan E."/>
            <person name="Sun H."/>
            <person name="Florea L."/>
            <person name="Miller W."/>
            <person name="Stoneking T."/>
            <person name="Nhan M."/>
            <person name="Waterston R."/>
            <person name="Wilson R.K."/>
        </authorList>
    </citation>
    <scope>NUCLEOTIDE SEQUENCE [LARGE SCALE GENOMIC DNA]</scope>
    <source>
        <strain>LT2 / SGSC1412 / ATCC 700720</strain>
    </source>
</reference>
<reference key="4">
    <citation type="journal article" date="1999" name="Mol. Microbiol.">
        <title>The genetic basis of tetrathionate respiration in Salmonella typhimurium.</title>
        <authorList>
            <person name="Hensel M."/>
            <person name="Hinsley A.P."/>
            <person name="Nikolaus T."/>
            <person name="Sawers G."/>
            <person name="Berks B.C."/>
        </authorList>
    </citation>
    <scope>FUNCTION</scope>
    <scope>DISRUPTION PHENOTYPE</scope>
    <source>
        <strain>LT2</strain>
    </source>
</reference>
<reference key="5">
    <citation type="journal article" date="2010" name="Nature">
        <title>Gut inflammation provides a respiratory electron acceptor for Salmonella.</title>
        <authorList>
            <person name="Winter S.E."/>
            <person name="Thiennimitr P."/>
            <person name="Winter M.G."/>
            <person name="Butler B.P."/>
            <person name="Huseby D.L."/>
            <person name="Crawford R.W."/>
            <person name="Russell J.M."/>
            <person name="Bevins C.L."/>
            <person name="Adams L.G."/>
            <person name="Tsolis R.M."/>
            <person name="Roth J.R."/>
            <person name="Baumler A.J."/>
        </authorList>
    </citation>
    <scope>FUNCTION IN VIRULENCE</scope>
</reference>
<comment type="function">
    <text evidence="4 5 6">Member of the two-component regulatory system TtrR/TtrS, which is required for synthesis of tetrathionate reductase. Probably functions as a sensor protein kinase which is autophosphorylated at a histidine residue in response to tetrathionate, and transfers its phosphate group to TtrR. During mice infection, the ability to use tetrathionate as an electron acceptor is a growth advantage for S.typhimurium over the competing microbiota in the lumen of the inflamed gut.</text>
</comment>
<comment type="catalytic activity">
    <reaction>
        <text>ATP + protein L-histidine = ADP + protein N-phospho-L-histidine.</text>
        <dbReference type="EC" id="2.7.13.3"/>
    </reaction>
</comment>
<comment type="subcellular location">
    <subcellularLocation>
        <location evidence="7">Cell inner membrane</location>
        <topology evidence="7">Multi-pass membrane protein</topology>
    </subcellularLocation>
</comment>
<comment type="PTM">
    <text evidence="1">Autophosphorylated.</text>
</comment>
<comment type="disruption phenotype">
    <text evidence="4">Mutants are defective in tetrathionate respiration.</text>
</comment>
<comment type="sequence caution" evidence="7">
    <conflict type="erroneous initiation">
        <sequence resource="EMBL-CDS" id="AAG31756"/>
    </conflict>
    <text>Truncated N-terminus.</text>
</comment>
<comment type="sequence caution" evidence="7">
    <conflict type="erroneous initiation">
        <sequence resource="EMBL-CDS" id="CAB37413"/>
    </conflict>
    <text>Truncated N-terminus.</text>
</comment>
<feature type="chain" id="PRO_0000417422" description="Tetrathionate sensor histidine kinase TtrS">
    <location>
        <begin position="1"/>
        <end position="592"/>
    </location>
</feature>
<feature type="transmembrane region" description="Helical" evidence="2">
    <location>
        <begin position="11"/>
        <end position="31"/>
    </location>
</feature>
<feature type="transmembrane region" description="Helical" evidence="2">
    <location>
        <begin position="307"/>
        <end position="327"/>
    </location>
</feature>
<feature type="domain" description="Histidine kinase" evidence="3">
    <location>
        <begin position="364"/>
        <end position="581"/>
    </location>
</feature>
<feature type="modified residue" description="Phosphohistidine; by autocatalysis" evidence="3">
    <location>
        <position position="367"/>
    </location>
</feature>
<dbReference type="EC" id="2.7.13.3"/>
<dbReference type="EMBL" id="AJ224978">
    <property type="protein sequence ID" value="CAB37413.1"/>
    <property type="status" value="ALT_INIT"/>
    <property type="molecule type" value="Genomic_DNA"/>
</dbReference>
<dbReference type="EMBL" id="AF282268">
    <property type="protein sequence ID" value="AAG31756.1"/>
    <property type="status" value="ALT_INIT"/>
    <property type="molecule type" value="Genomic_DNA"/>
</dbReference>
<dbReference type="EMBL" id="AE006468">
    <property type="protein sequence ID" value="AAL20310.1"/>
    <property type="molecule type" value="Genomic_DNA"/>
</dbReference>
<dbReference type="RefSeq" id="NP_460351.1">
    <property type="nucleotide sequence ID" value="NC_003197.2"/>
</dbReference>
<dbReference type="RefSeq" id="WP_001214413.1">
    <property type="nucleotide sequence ID" value="NC_003197.2"/>
</dbReference>
<dbReference type="SMR" id="Q8ZPP6"/>
<dbReference type="STRING" id="99287.STM1386"/>
<dbReference type="PaxDb" id="99287-STM1386"/>
<dbReference type="GeneID" id="1252904"/>
<dbReference type="KEGG" id="stm:STM1386"/>
<dbReference type="PATRIC" id="fig|99287.12.peg.1469"/>
<dbReference type="HOGENOM" id="CLU_011260_3_0_6"/>
<dbReference type="OMA" id="VSPRITM"/>
<dbReference type="PhylomeDB" id="Q8ZPP6"/>
<dbReference type="BioCyc" id="SENT99287:STM1386-MONOMER"/>
<dbReference type="BRENDA" id="2.7.13.3">
    <property type="organism ID" value="5542"/>
</dbReference>
<dbReference type="Proteomes" id="UP000001014">
    <property type="component" value="Chromosome"/>
</dbReference>
<dbReference type="GO" id="GO:0005886">
    <property type="term" value="C:plasma membrane"/>
    <property type="evidence" value="ECO:0007669"/>
    <property type="project" value="UniProtKB-SubCell"/>
</dbReference>
<dbReference type="GO" id="GO:0005524">
    <property type="term" value="F:ATP binding"/>
    <property type="evidence" value="ECO:0007669"/>
    <property type="project" value="UniProtKB-KW"/>
</dbReference>
<dbReference type="GO" id="GO:0000155">
    <property type="term" value="F:phosphorelay sensor kinase activity"/>
    <property type="evidence" value="ECO:0007669"/>
    <property type="project" value="InterPro"/>
</dbReference>
<dbReference type="CDD" id="cd00082">
    <property type="entry name" value="HisKA"/>
    <property type="match status" value="1"/>
</dbReference>
<dbReference type="Gene3D" id="1.10.287.130">
    <property type="match status" value="1"/>
</dbReference>
<dbReference type="Gene3D" id="3.30.565.10">
    <property type="entry name" value="Histidine kinase-like ATPase, C-terminal domain"/>
    <property type="match status" value="1"/>
</dbReference>
<dbReference type="Gene3D" id="3.40.190.10">
    <property type="entry name" value="Periplasmic binding protein-like II"/>
    <property type="match status" value="2"/>
</dbReference>
<dbReference type="InterPro" id="IPR036890">
    <property type="entry name" value="HATPase_C_sf"/>
</dbReference>
<dbReference type="InterPro" id="IPR005467">
    <property type="entry name" value="His_kinase_dom"/>
</dbReference>
<dbReference type="InterPro" id="IPR003661">
    <property type="entry name" value="HisK_dim/P_dom"/>
</dbReference>
<dbReference type="InterPro" id="IPR036097">
    <property type="entry name" value="HisK_dim/P_sf"/>
</dbReference>
<dbReference type="InterPro" id="IPR004358">
    <property type="entry name" value="Sig_transdc_His_kin-like_C"/>
</dbReference>
<dbReference type="InterPro" id="IPR053527">
    <property type="entry name" value="Tetrathionate_sensor_kinase"/>
</dbReference>
<dbReference type="NCBIfam" id="NF040750">
    <property type="entry name" value="tetrathio_HK"/>
    <property type="match status" value="1"/>
</dbReference>
<dbReference type="PANTHER" id="PTHR43065:SF10">
    <property type="entry name" value="PEROXIDE STRESS-ACTIVATED HISTIDINE KINASE MAK3"/>
    <property type="match status" value="1"/>
</dbReference>
<dbReference type="PANTHER" id="PTHR43065">
    <property type="entry name" value="SENSOR HISTIDINE KINASE"/>
    <property type="match status" value="1"/>
</dbReference>
<dbReference type="Pfam" id="PF02518">
    <property type="entry name" value="HATPase_c"/>
    <property type="match status" value="1"/>
</dbReference>
<dbReference type="Pfam" id="PF00512">
    <property type="entry name" value="HisKA"/>
    <property type="match status" value="1"/>
</dbReference>
<dbReference type="Pfam" id="PF12974">
    <property type="entry name" value="Phosphonate-bd"/>
    <property type="match status" value="1"/>
</dbReference>
<dbReference type="PRINTS" id="PR00344">
    <property type="entry name" value="BCTRLSENSOR"/>
</dbReference>
<dbReference type="SMART" id="SM00387">
    <property type="entry name" value="HATPase_c"/>
    <property type="match status" value="1"/>
</dbReference>
<dbReference type="SMART" id="SM00388">
    <property type="entry name" value="HisKA"/>
    <property type="match status" value="1"/>
</dbReference>
<dbReference type="SUPFAM" id="SSF55874">
    <property type="entry name" value="ATPase domain of HSP90 chaperone/DNA topoisomerase II/histidine kinase"/>
    <property type="match status" value="1"/>
</dbReference>
<dbReference type="SUPFAM" id="SSF47384">
    <property type="entry name" value="Homodimeric domain of signal transducing histidine kinase"/>
    <property type="match status" value="1"/>
</dbReference>
<dbReference type="SUPFAM" id="SSF53850">
    <property type="entry name" value="Periplasmic binding protein-like II"/>
    <property type="match status" value="1"/>
</dbReference>
<dbReference type="PROSITE" id="PS50109">
    <property type="entry name" value="HIS_KIN"/>
    <property type="match status" value="1"/>
</dbReference>
<protein>
    <recommendedName>
        <fullName>Tetrathionate sensor histidine kinase TtrS</fullName>
        <ecNumber>2.7.13.3</ecNumber>
    </recommendedName>
</protein>
<keyword id="KW-0067">ATP-binding</keyword>
<keyword id="KW-0997">Cell inner membrane</keyword>
<keyword id="KW-1003">Cell membrane</keyword>
<keyword id="KW-0418">Kinase</keyword>
<keyword id="KW-0472">Membrane</keyword>
<keyword id="KW-0547">Nucleotide-binding</keyword>
<keyword id="KW-0597">Phosphoprotein</keyword>
<keyword id="KW-1185">Reference proteome</keyword>
<keyword id="KW-0804">Transcription</keyword>
<keyword id="KW-0805">Transcription regulation</keyword>
<keyword id="KW-0808">Transferase</keyword>
<keyword id="KW-0812">Transmembrane</keyword>
<keyword id="KW-1133">Transmembrane helix</keyword>
<keyword id="KW-0902">Two-component regulatory system</keyword>
<sequence>MRGKTVRRLAVLAAVGLLCHGAWAGTWNIGILAMRGEASTRSHWQPLAKTLSQQLPGETFHIQPLDLHQMQEAVNQGTVQFVITNPAQFVQLNSHAPLRWLASLRSTRDGKAVSNVIGSVILTRRDSGITTAHDLIGKTVGAIDAQAFGGYLLGYKALSDAGLRPERDFHLRFTGFPGDALVYMLREKAVQAAIVPVCLLENMDQEGLINKKDFIALLSRPTPLPCLTSTPLYPDWSFAALPAVSDALADRVTRALFNAPAAASFHWGAPASTSQVEALLRDVRQHPQQRRLWLDVKSWLIQHQLMVGGVILAFLLLTLNYIWVMLLVRRRGKQLERNSVVLHQHERALETARQMSVLGEMTSGFAHELNQPLSAIRHYAQGCLIRLRAADEQHPLLPALEQIDQQAQRGADTLRNLRHWVSQAQGNPVLTEAWKAIAIREAIDHVWQLLRMAQQFPTVTLHTEVSAALRVTLPSVLLEQVLANIILNAAQAGATHLWIVAERTENGISIVLQDNAGGIDEALLRQAFQPFMTTRKEGMGLGLAICQRLVRYGRGDISIRNQTAPDGLSGTVVTIHFLHENGGRDGDNSSTG</sequence>
<accession>Q8ZPP6</accession>
<accession>Q9F7D6</accession>
<accession>Q9Z4S9</accession>
<proteinExistence type="evidence at protein level"/>
<evidence type="ECO:0000250" key="1"/>
<evidence type="ECO:0000255" key="2"/>
<evidence type="ECO:0000255" key="3">
    <source>
        <dbReference type="PROSITE-ProRule" id="PRU00107"/>
    </source>
</evidence>
<evidence type="ECO:0000269" key="4">
    <source>
    </source>
</evidence>
<evidence type="ECO:0000269" key="5">
    <source>
    </source>
</evidence>
<evidence type="ECO:0000269" key="6">
    <source>
    </source>
</evidence>
<evidence type="ECO:0000305" key="7"/>
<name>TTRS_SALTY</name>